<feature type="chain" id="PRO_0000164774" description="Gene 49 protein">
    <location>
        <begin position="1"/>
        <end position="197"/>
    </location>
</feature>
<feature type="region of interest" description="Disordered" evidence="1">
    <location>
        <begin position="1"/>
        <end position="49"/>
    </location>
</feature>
<feature type="region of interest" description="Disordered" evidence="1">
    <location>
        <begin position="114"/>
        <end position="157"/>
    </location>
</feature>
<feature type="compositionally biased region" description="Gly residues" evidence="1">
    <location>
        <begin position="117"/>
        <end position="135"/>
    </location>
</feature>
<feature type="compositionally biased region" description="Low complexity" evidence="1">
    <location>
        <begin position="136"/>
        <end position="146"/>
    </location>
</feature>
<protein>
    <recommendedName>
        <fullName>Gene 49 protein</fullName>
    </recommendedName>
    <alternativeName>
        <fullName>Gp49</fullName>
    </alternativeName>
</protein>
<organism>
    <name type="scientific">Mycobacterium phage D29</name>
    <name type="common">Mycobacteriophage D29</name>
    <dbReference type="NCBI Taxonomy" id="28369"/>
    <lineage>
        <taxon>Viruses</taxon>
        <taxon>Duplodnaviria</taxon>
        <taxon>Heunggongvirae</taxon>
        <taxon>Uroviricota</taxon>
        <taxon>Caudoviricetes</taxon>
        <taxon>Fromanvirus</taxon>
    </lineage>
</organism>
<dbReference type="EMBL" id="AF022214">
    <property type="protein sequence ID" value="AAC18489.2"/>
    <property type="molecule type" value="Genomic_DNA"/>
</dbReference>
<dbReference type="PIR" id="F72805">
    <property type="entry name" value="F72805"/>
</dbReference>
<dbReference type="RefSeq" id="NP_046864.1">
    <property type="nucleotide sequence ID" value="NC_001900.1"/>
</dbReference>
<dbReference type="GeneID" id="1261589"/>
<dbReference type="KEGG" id="vg:1261589"/>
<dbReference type="OrthoDB" id="14029at10239"/>
<dbReference type="Proteomes" id="UP000002131">
    <property type="component" value="Segment"/>
</dbReference>
<gene>
    <name type="primary">49</name>
</gene>
<proteinExistence type="predicted"/>
<keyword id="KW-1185">Reference proteome</keyword>
<sequence length="197" mass="20842">MRGNQLSYEDPFASAPVDTAPAEEAQQQTPTESPWDPPAQQTQTVEVRPAPADALSITFKGDGSYSAPWLVPKYASVTEALVDLGVDPDEVAKLGQGQKWFALMDRVTKMADHFANLGGGSKPNSGGGGSGGGGQQHQSRAPQQAQEAPGGEERFCKHGKMEFKSGVSKAGNTYALFSCTAPRNEQCPAQYPSKKNG</sequence>
<name>VG49_BPMD2</name>
<reference key="1">
    <citation type="journal article" date="1998" name="J. Mol. Biol.">
        <title>Genome structure of mycobacteriophage D29: implications for phage evolution.</title>
        <authorList>
            <person name="Ford M.E."/>
            <person name="Sarkis G.J."/>
            <person name="Belanger A.E."/>
            <person name="Hendrix R.W."/>
            <person name="Hatfull G.F."/>
        </authorList>
    </citation>
    <scope>NUCLEOTIDE SEQUENCE [LARGE SCALE GENOMIC DNA]</scope>
</reference>
<reference key="2">
    <citation type="submission" date="2021-06" db="EMBL/GenBank/DDBJ databases">
        <authorList>
            <person name="Ford M.E."/>
            <person name="Sarkis G.J."/>
            <person name="Belanger A.E."/>
            <person name="Hendrix R.W."/>
            <person name="Hatfull G.F."/>
        </authorList>
    </citation>
    <scope>SEQUENCE REVISION TO N-TERMINUS</scope>
</reference>
<evidence type="ECO:0000256" key="1">
    <source>
        <dbReference type="SAM" id="MobiDB-lite"/>
    </source>
</evidence>
<organismHost>
    <name type="scientific">Mycobacterium</name>
    <dbReference type="NCBI Taxonomy" id="1763"/>
</organismHost>
<accession>O64239</accession>